<dbReference type="EC" id="1.3.3.6"/>
<dbReference type="EMBL" id="AJ001299">
    <property type="protein sequence ID" value="CAA04659.1"/>
    <property type="molecule type" value="Genomic_DNA"/>
</dbReference>
<dbReference type="EMBL" id="CR382131">
    <property type="protein sequence ID" value="CAG80307.1"/>
    <property type="status" value="ALT_INIT"/>
    <property type="molecule type" value="Genomic_DNA"/>
</dbReference>
<dbReference type="RefSeq" id="XP_504703.1">
    <property type="nucleotide sequence ID" value="XM_504703.1"/>
</dbReference>
<dbReference type="PDB" id="5Y9D">
    <property type="method" value="X-ray"/>
    <property type="resolution" value="2.50 A"/>
    <property type="chains" value="A/B=1-689"/>
</dbReference>
<dbReference type="PDBsum" id="5Y9D"/>
<dbReference type="SMR" id="O74934"/>
<dbReference type="FunCoup" id="O74934">
    <property type="interactions" value="432"/>
</dbReference>
<dbReference type="STRING" id="284591.O74934"/>
<dbReference type="KEGG" id="yli:2912003"/>
<dbReference type="InParanoid" id="O74934"/>
<dbReference type="OrthoDB" id="60257at4891"/>
<dbReference type="UniPathway" id="UPA00661"/>
<dbReference type="Proteomes" id="UP000001300">
    <property type="component" value="Chromosome E"/>
</dbReference>
<dbReference type="GO" id="GO:0005777">
    <property type="term" value="C:peroxisome"/>
    <property type="evidence" value="ECO:0000318"/>
    <property type="project" value="GO_Central"/>
</dbReference>
<dbReference type="GO" id="GO:0003997">
    <property type="term" value="F:acyl-CoA oxidase activity"/>
    <property type="evidence" value="ECO:0000318"/>
    <property type="project" value="GO_Central"/>
</dbReference>
<dbReference type="GO" id="GO:0071949">
    <property type="term" value="F:FAD binding"/>
    <property type="evidence" value="ECO:0007669"/>
    <property type="project" value="InterPro"/>
</dbReference>
<dbReference type="GO" id="GO:0005504">
    <property type="term" value="F:fatty acid binding"/>
    <property type="evidence" value="ECO:0000318"/>
    <property type="project" value="GO_Central"/>
</dbReference>
<dbReference type="GO" id="GO:0050660">
    <property type="term" value="F:flavin adenine dinucleotide binding"/>
    <property type="evidence" value="ECO:0000318"/>
    <property type="project" value="GO_Central"/>
</dbReference>
<dbReference type="GO" id="GO:0033540">
    <property type="term" value="P:fatty acid beta-oxidation using acyl-CoA oxidase"/>
    <property type="evidence" value="ECO:0000318"/>
    <property type="project" value="GO_Central"/>
</dbReference>
<dbReference type="FunFam" id="1.10.540.10:FF:000018">
    <property type="entry name" value="Acyl-coenzyme A oxidase"/>
    <property type="match status" value="1"/>
</dbReference>
<dbReference type="FunFam" id="1.20.140.10:FF:000013">
    <property type="entry name" value="Acyl-coenzyme A oxidase"/>
    <property type="match status" value="1"/>
</dbReference>
<dbReference type="FunFam" id="1.20.140.10:FF:000015">
    <property type="entry name" value="Acyl-coenzyme A oxidase"/>
    <property type="match status" value="1"/>
</dbReference>
<dbReference type="FunFam" id="2.40.110.10:FF:000003">
    <property type="entry name" value="Acyl-coenzyme A oxidase"/>
    <property type="match status" value="1"/>
</dbReference>
<dbReference type="Gene3D" id="1.10.540.10">
    <property type="entry name" value="Acyl-CoA dehydrogenase/oxidase, N-terminal domain"/>
    <property type="match status" value="1"/>
</dbReference>
<dbReference type="Gene3D" id="2.40.110.10">
    <property type="entry name" value="Butyryl-CoA Dehydrogenase, subunit A, domain 2"/>
    <property type="match status" value="1"/>
</dbReference>
<dbReference type="Gene3D" id="1.20.140.10">
    <property type="entry name" value="Butyryl-CoA Dehydrogenase, subunit A, domain 3"/>
    <property type="match status" value="2"/>
</dbReference>
<dbReference type="InterPro" id="IPR055060">
    <property type="entry name" value="ACOX_C_alpha1"/>
</dbReference>
<dbReference type="InterPro" id="IPR029320">
    <property type="entry name" value="Acyl-CoA_ox_N"/>
</dbReference>
<dbReference type="InterPro" id="IPR006091">
    <property type="entry name" value="Acyl-CoA_Oxase/DH_mid-dom"/>
</dbReference>
<dbReference type="InterPro" id="IPR046373">
    <property type="entry name" value="Acyl-CoA_Oxase/DH_mid-dom_sf"/>
</dbReference>
<dbReference type="InterPro" id="IPR012258">
    <property type="entry name" value="Acyl-CoA_oxidase"/>
</dbReference>
<dbReference type="InterPro" id="IPR002655">
    <property type="entry name" value="Acyl-CoA_oxidase_C"/>
</dbReference>
<dbReference type="InterPro" id="IPR036250">
    <property type="entry name" value="AcylCo_DH-like_C"/>
</dbReference>
<dbReference type="InterPro" id="IPR037069">
    <property type="entry name" value="AcylCoA_DH/ox_N_sf"/>
</dbReference>
<dbReference type="InterPro" id="IPR009100">
    <property type="entry name" value="AcylCoA_DH/oxidase_NM_dom_sf"/>
</dbReference>
<dbReference type="PANTHER" id="PTHR10909:SF352">
    <property type="entry name" value="ACYL-COENZYME A OXIDASE-LIKE PROTEIN"/>
    <property type="match status" value="1"/>
</dbReference>
<dbReference type="PANTHER" id="PTHR10909">
    <property type="entry name" value="ELECTRON TRANSPORT OXIDOREDUCTASE"/>
    <property type="match status" value="1"/>
</dbReference>
<dbReference type="Pfam" id="PF01756">
    <property type="entry name" value="ACOX"/>
    <property type="match status" value="1"/>
</dbReference>
<dbReference type="Pfam" id="PF22924">
    <property type="entry name" value="ACOX_C_alpha1"/>
    <property type="match status" value="1"/>
</dbReference>
<dbReference type="Pfam" id="PF02770">
    <property type="entry name" value="Acyl-CoA_dh_M"/>
    <property type="match status" value="1"/>
</dbReference>
<dbReference type="Pfam" id="PF14749">
    <property type="entry name" value="Acyl-CoA_ox_N"/>
    <property type="match status" value="1"/>
</dbReference>
<dbReference type="PIRSF" id="PIRSF000168">
    <property type="entry name" value="Acyl-CoA_oxidase"/>
    <property type="match status" value="1"/>
</dbReference>
<dbReference type="SUPFAM" id="SSF47203">
    <property type="entry name" value="Acyl-CoA dehydrogenase C-terminal domain-like"/>
    <property type="match status" value="2"/>
</dbReference>
<dbReference type="SUPFAM" id="SSF56645">
    <property type="entry name" value="Acyl-CoA dehydrogenase NM domain-like"/>
    <property type="match status" value="1"/>
</dbReference>
<evidence type="ECO:0000250" key="1"/>
<evidence type="ECO:0000269" key="2">
    <source>
    </source>
</evidence>
<evidence type="ECO:0000305" key="3"/>
<evidence type="ECO:0007829" key="4">
    <source>
        <dbReference type="PDB" id="5Y9D"/>
    </source>
</evidence>
<name>ACOX1_YARLI</name>
<accession>O74934</accession>
<accession>Q6C3Q9</accession>
<keyword id="KW-0002">3D-structure</keyword>
<keyword id="KW-0274">FAD</keyword>
<keyword id="KW-0276">Fatty acid metabolism</keyword>
<keyword id="KW-0285">Flavoprotein</keyword>
<keyword id="KW-0443">Lipid metabolism</keyword>
<keyword id="KW-0560">Oxidoreductase</keyword>
<keyword id="KW-0576">Peroxisome</keyword>
<keyword id="KW-1185">Reference proteome</keyword>
<gene>
    <name type="primary">POX1</name>
    <name type="synonym">ACO1</name>
    <name type="ordered locus">YALI0E32835g</name>
</gene>
<comment type="catalytic activity">
    <reaction>
        <text>a 2,3-saturated acyl-CoA + O2 = a (2E)-enoyl-CoA + H2O2</text>
        <dbReference type="Rhea" id="RHEA:38959"/>
        <dbReference type="ChEBI" id="CHEBI:15379"/>
        <dbReference type="ChEBI" id="CHEBI:16240"/>
        <dbReference type="ChEBI" id="CHEBI:58856"/>
        <dbReference type="ChEBI" id="CHEBI:65111"/>
        <dbReference type="EC" id="1.3.3.6"/>
    </reaction>
</comment>
<comment type="cofactor">
    <cofactor evidence="1">
        <name>FAD</name>
        <dbReference type="ChEBI" id="CHEBI:57692"/>
    </cofactor>
</comment>
<comment type="pathway">
    <text>Lipid metabolism; peroxisomal fatty acid beta-oxidation.</text>
</comment>
<comment type="subunit">
    <text evidence="2">Heteropentamer composed of five different subunits.</text>
</comment>
<comment type="subcellular location">
    <subcellularLocation>
        <location evidence="2">Peroxisome</location>
    </subcellularLocation>
</comment>
<comment type="similarity">
    <text evidence="3">Belongs to the acyl-CoA oxidase family.</text>
</comment>
<comment type="sequence caution" evidence="3">
    <conflict type="erroneous initiation">
        <sequence resource="EMBL-CDS" id="CAG80307"/>
    </conflict>
</comment>
<feature type="chain" id="PRO_0000204701" description="Acyl-coenzyme A oxidase 1">
    <location>
        <begin position="1"/>
        <end position="689"/>
    </location>
</feature>
<feature type="active site" description="Proton acceptor" evidence="1">
    <location>
        <position position="444"/>
    </location>
</feature>
<feature type="binding site" evidence="1">
    <location>
        <position position="149"/>
    </location>
    <ligand>
        <name>FAD</name>
        <dbReference type="ChEBI" id="CHEBI:57692"/>
    </ligand>
</feature>
<feature type="binding site" evidence="1">
    <location>
        <position position="188"/>
    </location>
    <ligand>
        <name>FAD</name>
        <dbReference type="ChEBI" id="CHEBI:57692"/>
    </ligand>
</feature>
<feature type="turn" evidence="4">
    <location>
        <begin position="5"/>
        <end position="7"/>
    </location>
</feature>
<feature type="helix" evidence="4">
    <location>
        <begin position="8"/>
        <end position="18"/>
    </location>
</feature>
<feature type="helix" evidence="4">
    <location>
        <begin position="24"/>
        <end position="32"/>
    </location>
</feature>
<feature type="helix" evidence="4">
    <location>
        <begin position="35"/>
        <end position="50"/>
    </location>
</feature>
<feature type="helix" evidence="4">
    <location>
        <begin position="52"/>
        <end position="54"/>
    </location>
</feature>
<feature type="helix" evidence="4">
    <location>
        <begin position="59"/>
        <end position="61"/>
    </location>
</feature>
<feature type="helix" evidence="4">
    <location>
        <begin position="64"/>
        <end position="78"/>
    </location>
</feature>
<feature type="helix" evidence="4">
    <location>
        <begin position="81"/>
        <end position="84"/>
    </location>
</feature>
<feature type="helix" evidence="4">
    <location>
        <begin position="87"/>
        <end position="98"/>
    </location>
</feature>
<feature type="helix" evidence="4">
    <location>
        <begin position="102"/>
        <end position="112"/>
    </location>
</feature>
<feature type="helix" evidence="4">
    <location>
        <begin position="114"/>
        <end position="122"/>
    </location>
</feature>
<feature type="helix" evidence="4">
    <location>
        <begin position="125"/>
        <end position="133"/>
    </location>
</feature>
<feature type="turn" evidence="4">
    <location>
        <begin position="134"/>
        <end position="139"/>
    </location>
</feature>
<feature type="strand" evidence="4">
    <location>
        <begin position="150"/>
        <end position="152"/>
    </location>
</feature>
<feature type="helix" evidence="4">
    <location>
        <begin position="157"/>
        <end position="159"/>
    </location>
</feature>
<feature type="strand" evidence="4">
    <location>
        <begin position="163"/>
        <end position="167"/>
    </location>
</feature>
<feature type="turn" evidence="4">
    <location>
        <begin position="168"/>
        <end position="171"/>
    </location>
</feature>
<feature type="strand" evidence="4">
    <location>
        <begin position="172"/>
        <end position="176"/>
    </location>
</feature>
<feature type="helix" evidence="4">
    <location>
        <begin position="180"/>
        <end position="182"/>
    </location>
</feature>
<feature type="strand" evidence="4">
    <location>
        <begin position="184"/>
        <end position="187"/>
    </location>
</feature>
<feature type="turn" evidence="4">
    <location>
        <begin position="188"/>
        <end position="193"/>
    </location>
</feature>
<feature type="strand" evidence="4">
    <location>
        <begin position="195"/>
        <end position="205"/>
    </location>
</feature>
<feature type="strand" evidence="4">
    <location>
        <begin position="208"/>
        <end position="218"/>
    </location>
</feature>
<feature type="turn" evidence="4">
    <location>
        <begin position="222"/>
        <end position="224"/>
    </location>
</feature>
<feature type="strand" evidence="4">
    <location>
        <begin position="231"/>
        <end position="235"/>
    </location>
</feature>
<feature type="strand" evidence="4">
    <location>
        <begin position="239"/>
        <end position="241"/>
    </location>
</feature>
<feature type="strand" evidence="4">
    <location>
        <begin position="248"/>
        <end position="258"/>
    </location>
</feature>
<feature type="helix" evidence="4">
    <location>
        <begin position="259"/>
        <end position="261"/>
    </location>
</feature>
<feature type="strand" evidence="4">
    <location>
        <begin position="265"/>
        <end position="268"/>
    </location>
</feature>
<feature type="helix" evidence="4">
    <location>
        <begin position="286"/>
        <end position="314"/>
    </location>
</feature>
<feature type="helix" evidence="4">
    <location>
        <begin position="331"/>
        <end position="333"/>
    </location>
</feature>
<feature type="helix" evidence="4">
    <location>
        <begin position="335"/>
        <end position="371"/>
    </location>
</feature>
<feature type="helix" evidence="4">
    <location>
        <begin position="380"/>
        <end position="417"/>
    </location>
</feature>
<feature type="helix" evidence="4">
    <location>
        <begin position="418"/>
        <end position="424"/>
    </location>
</feature>
<feature type="helix" evidence="4">
    <location>
        <begin position="426"/>
        <end position="428"/>
    </location>
</feature>
<feature type="helix" evidence="4">
    <location>
        <begin position="430"/>
        <end position="437"/>
    </location>
</feature>
<feature type="helix" evidence="4">
    <location>
        <begin position="438"/>
        <end position="441"/>
    </location>
</feature>
<feature type="strand" evidence="4">
    <location>
        <begin position="443"/>
        <end position="445"/>
    </location>
</feature>
<feature type="helix" evidence="4">
    <location>
        <begin position="447"/>
        <end position="466"/>
    </location>
</feature>
<feature type="helix" evidence="4">
    <location>
        <begin position="473"/>
        <end position="479"/>
    </location>
</feature>
<feature type="helix" evidence="4">
    <location>
        <begin position="493"/>
        <end position="496"/>
    </location>
</feature>
<feature type="helix" evidence="4">
    <location>
        <begin position="499"/>
        <end position="524"/>
    </location>
</feature>
<feature type="turn" evidence="4">
    <location>
        <begin position="525"/>
        <end position="527"/>
    </location>
</feature>
<feature type="helix" evidence="4">
    <location>
        <begin position="530"/>
        <end position="536"/>
    </location>
</feature>
<feature type="helix" evidence="4">
    <location>
        <begin position="538"/>
        <end position="561"/>
    </location>
</feature>
<feature type="turn" evidence="4">
    <location>
        <begin position="566"/>
        <end position="568"/>
    </location>
</feature>
<feature type="helix" evidence="4">
    <location>
        <begin position="569"/>
        <end position="586"/>
    </location>
</feature>
<feature type="helix" evidence="4">
    <location>
        <begin position="588"/>
        <end position="593"/>
    </location>
</feature>
<feature type="helix" evidence="4">
    <location>
        <begin position="599"/>
        <end position="617"/>
    </location>
</feature>
<feature type="helix" evidence="4">
    <location>
        <begin position="620"/>
        <end position="626"/>
    </location>
</feature>
<feature type="helix" evidence="4">
    <location>
        <begin position="631"/>
        <end position="634"/>
    </location>
</feature>
<feature type="helix" evidence="4">
    <location>
        <begin position="637"/>
        <end position="639"/>
    </location>
</feature>
<feature type="helix" evidence="4">
    <location>
        <begin position="645"/>
        <end position="656"/>
    </location>
</feature>
<feature type="turn" evidence="4">
    <location>
        <begin position="665"/>
        <end position="670"/>
    </location>
</feature>
<feature type="helix" evidence="4">
    <location>
        <begin position="671"/>
        <end position="675"/>
    </location>
</feature>
<organism>
    <name type="scientific">Yarrowia lipolytica (strain CLIB 122 / E 150)</name>
    <name type="common">Yeast</name>
    <name type="synonym">Candida lipolytica</name>
    <dbReference type="NCBI Taxonomy" id="284591"/>
    <lineage>
        <taxon>Eukaryota</taxon>
        <taxon>Fungi</taxon>
        <taxon>Dikarya</taxon>
        <taxon>Ascomycota</taxon>
        <taxon>Saccharomycotina</taxon>
        <taxon>Dipodascomycetes</taxon>
        <taxon>Dipodascales</taxon>
        <taxon>Dipodascales incertae sedis</taxon>
        <taxon>Yarrowia</taxon>
    </lineage>
</organism>
<sequence>MTTNTFTDPPVEMAKERGKTQFTVRDVTNFLNGGEEETQIVEKIMSSIERDPVLSVTADYDCNLQQARKQTMERVAALSPYLVTDTEKLSLWRAQLHGMVDMSTRTRLSIHNNLFIGSIRGSGTPEQFKYWVKKGAVAVKQFYGCFAMTELGHGSNLKGLETTATYDQDSDQFIINTPHIGATKWWIGGAAHTSTHCVCFAKLIVHGKDYGTRNFVVPLRNVHDHSLKVGVSIGDIGKKMGRDGVDNGWIQFTNVRIPRQNMLMRYAKVSDTGVVTKPALDQLTYGALIRGRVSMIADSFHVSKRFLTIALRYACVRRQFGTSGDTKETKIIDYPYHQRRLLPLLAYCYAMKMGADEAQKTWIETTDRILALNPNDPAQKNDLEKAVTDTKELFAASAGMKAFTTWGCAKIIDECRQACGGHGYSGYNGFGQGYADWVVQCTWEGDNNVLCLSMGRGLVQSALQILAGKHVGASIQYVGDKSKISQNGQGTPREQLLSPEFLVEAFRTASRNNILRTTDKYQELVKTLNPDQAFEELSQQRFQCARIHTRQHLISSFYARIATAKDDIKPHLLKLANLFALWSIEEDTGIFLRENILTPGDIDLINSLVDELCVAVRDQVIGLTDAFGLSDFFINAPIGSYDGNVYEKYFAKVNQQNPATNPRPPYYESTLKPFLFREEEDDEICDLDE</sequence>
<proteinExistence type="evidence at protein level"/>
<reference key="1">
    <citation type="submission" date="1997-08" db="EMBL/GenBank/DDBJ databases">
        <authorList>
            <person name="Le Clainche A."/>
            <person name="Nicaud J.-M."/>
        </authorList>
    </citation>
    <scope>NUCLEOTIDE SEQUENCE [GENOMIC DNA]</scope>
    <source>
        <strain>ATCC 20460 / W29 / CBS 7504 / IFP29</strain>
    </source>
</reference>
<reference key="2">
    <citation type="journal article" date="2004" name="Nature">
        <title>Genome evolution in yeasts.</title>
        <authorList>
            <person name="Dujon B."/>
            <person name="Sherman D."/>
            <person name="Fischer G."/>
            <person name="Durrens P."/>
            <person name="Casaregola S."/>
            <person name="Lafontaine I."/>
            <person name="de Montigny J."/>
            <person name="Marck C."/>
            <person name="Neuveglise C."/>
            <person name="Talla E."/>
            <person name="Goffard N."/>
            <person name="Frangeul L."/>
            <person name="Aigle M."/>
            <person name="Anthouard V."/>
            <person name="Babour A."/>
            <person name="Barbe V."/>
            <person name="Barnay S."/>
            <person name="Blanchin S."/>
            <person name="Beckerich J.-M."/>
            <person name="Beyne E."/>
            <person name="Bleykasten C."/>
            <person name="Boisrame A."/>
            <person name="Boyer J."/>
            <person name="Cattolico L."/>
            <person name="Confanioleri F."/>
            <person name="de Daruvar A."/>
            <person name="Despons L."/>
            <person name="Fabre E."/>
            <person name="Fairhead C."/>
            <person name="Ferry-Dumazet H."/>
            <person name="Groppi A."/>
            <person name="Hantraye F."/>
            <person name="Hennequin C."/>
            <person name="Jauniaux N."/>
            <person name="Joyet P."/>
            <person name="Kachouri R."/>
            <person name="Kerrest A."/>
            <person name="Koszul R."/>
            <person name="Lemaire M."/>
            <person name="Lesur I."/>
            <person name="Ma L."/>
            <person name="Muller H."/>
            <person name="Nicaud J.-M."/>
            <person name="Nikolski M."/>
            <person name="Oztas S."/>
            <person name="Ozier-Kalogeropoulos O."/>
            <person name="Pellenz S."/>
            <person name="Potier S."/>
            <person name="Richard G.-F."/>
            <person name="Straub M.-L."/>
            <person name="Suleau A."/>
            <person name="Swennen D."/>
            <person name="Tekaia F."/>
            <person name="Wesolowski-Louvel M."/>
            <person name="Westhof E."/>
            <person name="Wirth B."/>
            <person name="Zeniou-Meyer M."/>
            <person name="Zivanovic Y."/>
            <person name="Bolotin-Fukuhara M."/>
            <person name="Thierry A."/>
            <person name="Bouchier C."/>
            <person name="Caudron B."/>
            <person name="Scarpelli C."/>
            <person name="Gaillardin C."/>
            <person name="Weissenbach J."/>
            <person name="Wincker P."/>
            <person name="Souciet J.-L."/>
        </authorList>
    </citation>
    <scope>NUCLEOTIDE SEQUENCE [LARGE SCALE GENOMIC DNA]</scope>
    <source>
        <strain>CLIB 122 / E 150</strain>
    </source>
</reference>
<reference key="3">
    <citation type="journal article" date="2002" name="J. Cell Biol.">
        <title>Acyl-CoA oxidase is imported as a heteropentameric, cofactor-containing complex into peroxisomes of Yarrowia lipolytica.</title>
        <authorList>
            <person name="Titorenko V.I."/>
            <person name="Nicaud J.-M."/>
            <person name="Wang H."/>
            <person name="Chan H."/>
            <person name="Rachubinski R.A."/>
        </authorList>
    </citation>
    <scope>SUBUNIT</scope>
    <scope>SUBCELLULAR LOCATION</scope>
</reference>
<protein>
    <recommendedName>
        <fullName>Acyl-coenzyme A oxidase 1</fullName>
        <shortName>Acyl-CoA oxidase 1</shortName>
        <ecNumber>1.3.3.6</ecNumber>
    </recommendedName>
</protein>